<comment type="catalytic activity">
    <reaction>
        <text>holo-[ACP] + malonyl-CoA = malonyl-[ACP] + CoA</text>
        <dbReference type="Rhea" id="RHEA:41792"/>
        <dbReference type="Rhea" id="RHEA-COMP:9623"/>
        <dbReference type="Rhea" id="RHEA-COMP:9685"/>
        <dbReference type="ChEBI" id="CHEBI:57287"/>
        <dbReference type="ChEBI" id="CHEBI:57384"/>
        <dbReference type="ChEBI" id="CHEBI:64479"/>
        <dbReference type="ChEBI" id="CHEBI:78449"/>
        <dbReference type="EC" id="2.3.1.39"/>
    </reaction>
</comment>
<comment type="pathway">
    <text>Lipid metabolism; fatty acid biosynthesis.</text>
</comment>
<comment type="similarity">
    <text evidence="2">Belongs to the FabD family.</text>
</comment>
<protein>
    <recommendedName>
        <fullName>Malonyl CoA-acyl carrier protein transacylase</fullName>
        <shortName>MCT</shortName>
        <ecNumber>2.3.1.39</ecNumber>
    </recommendedName>
</protein>
<organism>
    <name type="scientific">Staphylococcus aureus (strain COL)</name>
    <dbReference type="NCBI Taxonomy" id="93062"/>
    <lineage>
        <taxon>Bacteria</taxon>
        <taxon>Bacillati</taxon>
        <taxon>Bacillota</taxon>
        <taxon>Bacilli</taxon>
        <taxon>Bacillales</taxon>
        <taxon>Staphylococcaceae</taxon>
        <taxon>Staphylococcus</taxon>
    </lineage>
</organism>
<feature type="chain" id="PRO_0000194221" description="Malonyl CoA-acyl carrier protein transacylase">
    <location>
        <begin position="1"/>
        <end position="308"/>
    </location>
</feature>
<feature type="active site" evidence="1">
    <location>
        <position position="89"/>
    </location>
</feature>
<feature type="active site" evidence="1">
    <location>
        <position position="199"/>
    </location>
</feature>
<sequence>MSKTAIIFPGQGAQKVGMAQDLFNNNDQATEILTSAANTLDFDILETMFTDEEGKLGETENTQPALLTHSSALLAALKNLNPDFTMGHSLGEYSSLVAADVLSFEDAVKIVRKRGQLMAQAFPTGVGSMAAVLGLDFDKVDEICKSLSSDDKIIEPANINCPGQIVVSGHKALIDELVEKGKSLGAKRVMPLAVSGPFHSSLMKVIEEDFSSYINQFEWRDAKFPVVQNVNAQGETDKEVIKSNMVKQLYSPVQFINSTEWLIDQGVDHFIEIGPGKVLSGLIKKINRDVKLTSIQTLEDVKGWNEND</sequence>
<accession>Q5HGK3</accession>
<name>FABD_STAAC</name>
<reference key="1">
    <citation type="journal article" date="2005" name="J. Bacteriol.">
        <title>Insights on evolution of virulence and resistance from the complete genome analysis of an early methicillin-resistant Staphylococcus aureus strain and a biofilm-producing methicillin-resistant Staphylococcus epidermidis strain.</title>
        <authorList>
            <person name="Gill S.R."/>
            <person name="Fouts D.E."/>
            <person name="Archer G.L."/>
            <person name="Mongodin E.F."/>
            <person name="DeBoy R.T."/>
            <person name="Ravel J."/>
            <person name="Paulsen I.T."/>
            <person name="Kolonay J.F."/>
            <person name="Brinkac L.M."/>
            <person name="Beanan M.J."/>
            <person name="Dodson R.J."/>
            <person name="Daugherty S.C."/>
            <person name="Madupu R."/>
            <person name="Angiuoli S.V."/>
            <person name="Durkin A.S."/>
            <person name="Haft D.H."/>
            <person name="Vamathevan J.J."/>
            <person name="Khouri H."/>
            <person name="Utterback T.R."/>
            <person name="Lee C."/>
            <person name="Dimitrov G."/>
            <person name="Jiang L."/>
            <person name="Qin H."/>
            <person name="Weidman J."/>
            <person name="Tran K."/>
            <person name="Kang K.H."/>
            <person name="Hance I.R."/>
            <person name="Nelson K.E."/>
            <person name="Fraser C.M."/>
        </authorList>
    </citation>
    <scope>NUCLEOTIDE SEQUENCE [LARGE SCALE GENOMIC DNA]</scope>
    <source>
        <strain>COL</strain>
    </source>
</reference>
<evidence type="ECO:0000250" key="1"/>
<evidence type="ECO:0000305" key="2"/>
<keyword id="KW-0012">Acyltransferase</keyword>
<keyword id="KW-0275">Fatty acid biosynthesis</keyword>
<keyword id="KW-0276">Fatty acid metabolism</keyword>
<keyword id="KW-0444">Lipid biosynthesis</keyword>
<keyword id="KW-0443">Lipid metabolism</keyword>
<keyword id="KW-0808">Transferase</keyword>
<dbReference type="EC" id="2.3.1.39"/>
<dbReference type="EMBL" id="CP000046">
    <property type="protein sequence ID" value="AAW38078.1"/>
    <property type="molecule type" value="Genomic_DNA"/>
</dbReference>
<dbReference type="RefSeq" id="WP_000047348.1">
    <property type="nucleotide sequence ID" value="NZ_JBGOFO010000002.1"/>
</dbReference>
<dbReference type="SMR" id="Q5HGK3"/>
<dbReference type="KEGG" id="sac:SACOL1244"/>
<dbReference type="HOGENOM" id="CLU_030558_0_1_9"/>
<dbReference type="UniPathway" id="UPA00094"/>
<dbReference type="Proteomes" id="UP000000530">
    <property type="component" value="Chromosome"/>
</dbReference>
<dbReference type="GO" id="GO:0005829">
    <property type="term" value="C:cytosol"/>
    <property type="evidence" value="ECO:0007669"/>
    <property type="project" value="TreeGrafter"/>
</dbReference>
<dbReference type="GO" id="GO:0004314">
    <property type="term" value="F:[acyl-carrier-protein] S-malonyltransferase activity"/>
    <property type="evidence" value="ECO:0007669"/>
    <property type="project" value="UniProtKB-EC"/>
</dbReference>
<dbReference type="GO" id="GO:0006633">
    <property type="term" value="P:fatty acid biosynthetic process"/>
    <property type="evidence" value="ECO:0007669"/>
    <property type="project" value="UniProtKB-UniPathway"/>
</dbReference>
<dbReference type="FunFam" id="3.30.70.250:FF:000001">
    <property type="entry name" value="Malonyl CoA-acyl carrier protein transacylase"/>
    <property type="match status" value="1"/>
</dbReference>
<dbReference type="Gene3D" id="3.30.70.250">
    <property type="entry name" value="Malonyl-CoA ACP transacylase, ACP-binding"/>
    <property type="match status" value="1"/>
</dbReference>
<dbReference type="Gene3D" id="3.40.366.10">
    <property type="entry name" value="Malonyl-Coenzyme A Acyl Carrier Protein, domain 2"/>
    <property type="match status" value="1"/>
</dbReference>
<dbReference type="InterPro" id="IPR001227">
    <property type="entry name" value="Ac_transferase_dom_sf"/>
</dbReference>
<dbReference type="InterPro" id="IPR014043">
    <property type="entry name" value="Acyl_transferase_dom"/>
</dbReference>
<dbReference type="InterPro" id="IPR016035">
    <property type="entry name" value="Acyl_Trfase/lysoPLipase"/>
</dbReference>
<dbReference type="InterPro" id="IPR050858">
    <property type="entry name" value="Mal-CoA-ACP_Trans/PKS_FabD"/>
</dbReference>
<dbReference type="InterPro" id="IPR024925">
    <property type="entry name" value="Malonyl_CoA-ACP_transAc"/>
</dbReference>
<dbReference type="InterPro" id="IPR004410">
    <property type="entry name" value="Malonyl_CoA-ACP_transAc_FabD"/>
</dbReference>
<dbReference type="InterPro" id="IPR016036">
    <property type="entry name" value="Malonyl_transacylase_ACP-bd"/>
</dbReference>
<dbReference type="NCBIfam" id="TIGR00128">
    <property type="entry name" value="fabD"/>
    <property type="match status" value="1"/>
</dbReference>
<dbReference type="PANTHER" id="PTHR42681">
    <property type="entry name" value="MALONYL-COA-ACYL CARRIER PROTEIN TRANSACYLASE, MITOCHONDRIAL"/>
    <property type="match status" value="1"/>
</dbReference>
<dbReference type="PANTHER" id="PTHR42681:SF1">
    <property type="entry name" value="MALONYL-COA-ACYL CARRIER PROTEIN TRANSACYLASE, MITOCHONDRIAL"/>
    <property type="match status" value="1"/>
</dbReference>
<dbReference type="Pfam" id="PF00698">
    <property type="entry name" value="Acyl_transf_1"/>
    <property type="match status" value="1"/>
</dbReference>
<dbReference type="PIRSF" id="PIRSF000446">
    <property type="entry name" value="Mct"/>
    <property type="match status" value="1"/>
</dbReference>
<dbReference type="SMART" id="SM00827">
    <property type="entry name" value="PKS_AT"/>
    <property type="match status" value="1"/>
</dbReference>
<dbReference type="SUPFAM" id="SSF52151">
    <property type="entry name" value="FabD/lysophospholipase-like"/>
    <property type="match status" value="1"/>
</dbReference>
<dbReference type="SUPFAM" id="SSF55048">
    <property type="entry name" value="Probable ACP-binding domain of malonyl-CoA ACP transacylase"/>
    <property type="match status" value="1"/>
</dbReference>
<proteinExistence type="inferred from homology"/>
<gene>
    <name type="primary">fabD</name>
    <name type="ordered locus">SACOL1244</name>
</gene>